<name>HSLO_STRGC</name>
<evidence type="ECO:0000255" key="1">
    <source>
        <dbReference type="HAMAP-Rule" id="MF_00117"/>
    </source>
</evidence>
<feature type="chain" id="PRO_1000076090" description="33 kDa chaperonin">
    <location>
        <begin position="1"/>
        <end position="290"/>
    </location>
</feature>
<feature type="disulfide bond" description="Redox-active" evidence="1">
    <location>
        <begin position="235"/>
        <end position="237"/>
    </location>
</feature>
<feature type="disulfide bond" description="Redox-active" evidence="1">
    <location>
        <begin position="268"/>
        <end position="271"/>
    </location>
</feature>
<dbReference type="EMBL" id="CP000725">
    <property type="protein sequence ID" value="ABV11071.1"/>
    <property type="molecule type" value="Genomic_DNA"/>
</dbReference>
<dbReference type="RefSeq" id="WP_012130969.1">
    <property type="nucleotide sequence ID" value="NC_009785.1"/>
</dbReference>
<dbReference type="SMR" id="A8AZN1"/>
<dbReference type="STRING" id="467705.SGO_1991"/>
<dbReference type="KEGG" id="sgo:SGO_1991"/>
<dbReference type="eggNOG" id="COG1281">
    <property type="taxonomic scope" value="Bacteria"/>
</dbReference>
<dbReference type="HOGENOM" id="CLU_054493_1_0_9"/>
<dbReference type="Proteomes" id="UP000001131">
    <property type="component" value="Chromosome"/>
</dbReference>
<dbReference type="GO" id="GO:0005737">
    <property type="term" value="C:cytoplasm"/>
    <property type="evidence" value="ECO:0007669"/>
    <property type="project" value="UniProtKB-SubCell"/>
</dbReference>
<dbReference type="GO" id="GO:0044183">
    <property type="term" value="F:protein folding chaperone"/>
    <property type="evidence" value="ECO:0007669"/>
    <property type="project" value="TreeGrafter"/>
</dbReference>
<dbReference type="GO" id="GO:0051082">
    <property type="term" value="F:unfolded protein binding"/>
    <property type="evidence" value="ECO:0007669"/>
    <property type="project" value="UniProtKB-UniRule"/>
</dbReference>
<dbReference type="GO" id="GO:0042026">
    <property type="term" value="P:protein refolding"/>
    <property type="evidence" value="ECO:0007669"/>
    <property type="project" value="TreeGrafter"/>
</dbReference>
<dbReference type="CDD" id="cd00498">
    <property type="entry name" value="Hsp33"/>
    <property type="match status" value="1"/>
</dbReference>
<dbReference type="Gene3D" id="3.55.30.10">
    <property type="entry name" value="Hsp33 domain"/>
    <property type="match status" value="1"/>
</dbReference>
<dbReference type="Gene3D" id="3.90.1280.10">
    <property type="entry name" value="HSP33 redox switch-like"/>
    <property type="match status" value="1"/>
</dbReference>
<dbReference type="HAMAP" id="MF_00117">
    <property type="entry name" value="HslO"/>
    <property type="match status" value="1"/>
</dbReference>
<dbReference type="InterPro" id="IPR000397">
    <property type="entry name" value="Heat_shock_Hsp33"/>
</dbReference>
<dbReference type="InterPro" id="IPR016154">
    <property type="entry name" value="Heat_shock_Hsp33_C"/>
</dbReference>
<dbReference type="InterPro" id="IPR016153">
    <property type="entry name" value="Heat_shock_Hsp33_N"/>
</dbReference>
<dbReference type="NCBIfam" id="NF001033">
    <property type="entry name" value="PRK00114.1"/>
    <property type="match status" value="1"/>
</dbReference>
<dbReference type="PANTHER" id="PTHR30111">
    <property type="entry name" value="33 KDA CHAPERONIN"/>
    <property type="match status" value="1"/>
</dbReference>
<dbReference type="PANTHER" id="PTHR30111:SF1">
    <property type="entry name" value="33 KDA CHAPERONIN"/>
    <property type="match status" value="1"/>
</dbReference>
<dbReference type="Pfam" id="PF01430">
    <property type="entry name" value="HSP33"/>
    <property type="match status" value="1"/>
</dbReference>
<dbReference type="PIRSF" id="PIRSF005261">
    <property type="entry name" value="Heat_shock_Hsp33"/>
    <property type="match status" value="1"/>
</dbReference>
<dbReference type="SUPFAM" id="SSF64397">
    <property type="entry name" value="Hsp33 domain"/>
    <property type="match status" value="1"/>
</dbReference>
<dbReference type="SUPFAM" id="SSF118352">
    <property type="entry name" value="HSP33 redox switch-like"/>
    <property type="match status" value="1"/>
</dbReference>
<organism>
    <name type="scientific">Streptococcus gordonii (strain Challis / ATCC 35105 / BCRC 15272 / CH1 / DL1 / V288)</name>
    <dbReference type="NCBI Taxonomy" id="467705"/>
    <lineage>
        <taxon>Bacteria</taxon>
        <taxon>Bacillati</taxon>
        <taxon>Bacillota</taxon>
        <taxon>Bacilli</taxon>
        <taxon>Lactobacillales</taxon>
        <taxon>Streptococcaceae</taxon>
        <taxon>Streptococcus</taxon>
    </lineage>
</organism>
<comment type="function">
    <text evidence="1">Redox regulated molecular chaperone. Protects both thermally unfolding and oxidatively damaged proteins from irreversible aggregation. Plays an important role in the bacterial defense system toward oxidative stress.</text>
</comment>
<comment type="subcellular location">
    <subcellularLocation>
        <location evidence="1">Cytoplasm</location>
    </subcellularLocation>
</comment>
<comment type="PTM">
    <text evidence="1">Under oxidizing conditions two disulfide bonds are formed involving the reactive cysteines. Under reducing conditions zinc is bound to the reactive cysteines and the protein is inactive.</text>
</comment>
<comment type="similarity">
    <text evidence="1">Belongs to the HSP33 family.</text>
</comment>
<protein>
    <recommendedName>
        <fullName evidence="1">33 kDa chaperonin</fullName>
    </recommendedName>
    <alternativeName>
        <fullName evidence="1">Heat shock protein 33 homolog</fullName>
        <shortName evidence="1">HSP33</shortName>
    </alternativeName>
</protein>
<sequence length="290" mass="31733">MDKIIKTISENGSFRAYVLDSTETVRTAQEKHQTQASSTVALGRTLIASQILAANEKGQTKITVKVLGTSSLGAIITVADTEGNVKGYVQNPGVDIKKTATGEVLVGPFVGQGEFLVITDYGTGNPYNSMTPLISGEIGEDLAFYLTESQQTPSAVGLNVLLDENDKVKVAGGFLVQVLPGAKEAEIARFEKRIQEMPAISKLLESDDHIEALLAAIYGDEPYKRLSEEEIRFQCDCSKERFMNALATLPKADLEEMRDQDQGAEIICQFCQTAYHFDQNDLEELIRDKS</sequence>
<gene>
    <name evidence="1" type="primary">hslO</name>
    <name type="ordered locus">SGO_1991</name>
</gene>
<keyword id="KW-0143">Chaperone</keyword>
<keyword id="KW-0963">Cytoplasm</keyword>
<keyword id="KW-1015">Disulfide bond</keyword>
<keyword id="KW-0676">Redox-active center</keyword>
<keyword id="KW-1185">Reference proteome</keyword>
<keyword id="KW-0346">Stress response</keyword>
<keyword id="KW-0862">Zinc</keyword>
<proteinExistence type="inferred from homology"/>
<accession>A8AZN1</accession>
<reference key="1">
    <citation type="journal article" date="2007" name="J. Bacteriol.">
        <title>Genome-wide transcriptional changes in Streptococcus gordonii in response to competence signaling peptide.</title>
        <authorList>
            <person name="Vickerman M.M."/>
            <person name="Iobst S."/>
            <person name="Jesionowski A.M."/>
            <person name="Gill S.R."/>
        </authorList>
    </citation>
    <scope>NUCLEOTIDE SEQUENCE [LARGE SCALE GENOMIC DNA]</scope>
    <source>
        <strain>Challis / ATCC 35105 / BCRC 15272 / CH1 / DL1 / V288</strain>
    </source>
</reference>